<feature type="chain" id="PRO_0000280136" description="Neuraminidase">
    <location>
        <begin position="1"/>
        <end position="469"/>
    </location>
</feature>
<feature type="topological domain" description="Intravirion" evidence="1">
    <location>
        <begin position="1"/>
        <end position="9"/>
    </location>
</feature>
<feature type="transmembrane region" description="Helical" evidence="1">
    <location>
        <begin position="10"/>
        <end position="30"/>
    </location>
</feature>
<feature type="topological domain" description="Virion surface" evidence="1">
    <location>
        <begin position="31"/>
        <end position="469"/>
    </location>
</feature>
<feature type="region of interest" description="Involved in apical transport and lipid raft association" evidence="1">
    <location>
        <begin position="11"/>
        <end position="33"/>
    </location>
</feature>
<feature type="region of interest" description="Hypervariable stalk region" evidence="1">
    <location>
        <begin position="36"/>
        <end position="88"/>
    </location>
</feature>
<feature type="region of interest" description="Head of neuraminidase" evidence="1">
    <location>
        <begin position="91"/>
        <end position="469"/>
    </location>
</feature>
<feature type="region of interest" description="Disordered" evidence="2">
    <location>
        <begin position="324"/>
        <end position="350"/>
    </location>
</feature>
<feature type="compositionally biased region" description="Low complexity" evidence="2">
    <location>
        <begin position="333"/>
        <end position="342"/>
    </location>
</feature>
<feature type="active site" description="Proton donor/acceptor" evidence="1">
    <location>
        <position position="151"/>
    </location>
</feature>
<feature type="active site" description="Nucleophile" evidence="1">
    <location>
        <position position="406"/>
    </location>
</feature>
<feature type="binding site" evidence="1">
    <location>
        <position position="118"/>
    </location>
    <ligand>
        <name>substrate</name>
    </ligand>
</feature>
<feature type="binding site" evidence="1">
    <location>
        <position position="152"/>
    </location>
    <ligand>
        <name>substrate</name>
    </ligand>
</feature>
<feature type="binding site" evidence="1">
    <location>
        <begin position="276"/>
        <end position="277"/>
    </location>
    <ligand>
        <name>substrate</name>
    </ligand>
</feature>
<feature type="binding site" evidence="1">
    <location>
        <position position="292"/>
    </location>
    <ligand>
        <name>substrate</name>
    </ligand>
</feature>
<feature type="binding site" evidence="1">
    <location>
        <position position="293"/>
    </location>
    <ligand>
        <name>Ca(2+)</name>
        <dbReference type="ChEBI" id="CHEBI:29108"/>
    </ligand>
</feature>
<feature type="binding site" evidence="1">
    <location>
        <position position="297"/>
    </location>
    <ligand>
        <name>Ca(2+)</name>
        <dbReference type="ChEBI" id="CHEBI:29108"/>
    </ligand>
</feature>
<feature type="binding site" evidence="1">
    <location>
        <position position="324"/>
    </location>
    <ligand>
        <name>Ca(2+)</name>
        <dbReference type="ChEBI" id="CHEBI:29108"/>
    </ligand>
</feature>
<feature type="binding site" evidence="1">
    <location>
        <position position="371"/>
    </location>
    <ligand>
        <name>substrate</name>
    </ligand>
</feature>
<feature type="glycosylation site" description="N-linked (GlcNAc...) asparagine; by host" evidence="1">
    <location>
        <position position="61"/>
    </location>
</feature>
<feature type="glycosylation site" description="N-linked (GlcNAc...) asparagine; by host" evidence="1">
    <location>
        <position position="69"/>
    </location>
</feature>
<feature type="glycosylation site" description="N-linked (GlcNAc...) asparagine; by host" evidence="1">
    <location>
        <position position="70"/>
    </location>
</feature>
<feature type="glycosylation site" description="N-linked (GlcNAc...) asparagine; by host" evidence="1">
    <location>
        <position position="86"/>
    </location>
</feature>
<feature type="glycosylation site" description="N-linked (GlcNAc...) asparagine; by host" evidence="1">
    <location>
        <position position="146"/>
    </location>
</feature>
<feature type="glycosylation site" description="N-linked (GlcNAc...) asparagine; by host" evidence="1">
    <location>
        <position position="200"/>
    </location>
</feature>
<feature type="glycosylation site" description="N-linked (GlcNAc...) asparagine; by host" evidence="1">
    <location>
        <position position="234"/>
    </location>
</feature>
<feature type="glycosylation site" description="N-linked (GlcNAc...) asparagine; by host" evidence="1">
    <location>
        <position position="402"/>
    </location>
</feature>
<feature type="disulfide bond" evidence="1">
    <location>
        <begin position="92"/>
        <end position="417"/>
    </location>
</feature>
<feature type="disulfide bond" evidence="1">
    <location>
        <begin position="124"/>
        <end position="129"/>
    </location>
</feature>
<feature type="disulfide bond" evidence="1">
    <location>
        <begin position="183"/>
        <end position="230"/>
    </location>
</feature>
<feature type="disulfide bond" evidence="1">
    <location>
        <begin position="232"/>
        <end position="237"/>
    </location>
</feature>
<feature type="disulfide bond" evidence="1">
    <location>
        <begin position="278"/>
        <end position="291"/>
    </location>
</feature>
<feature type="disulfide bond" evidence="1">
    <location>
        <begin position="280"/>
        <end position="289"/>
    </location>
</feature>
<feature type="disulfide bond" evidence="1">
    <location>
        <begin position="318"/>
        <end position="337"/>
    </location>
</feature>
<feature type="disulfide bond" evidence="1">
    <location>
        <begin position="421"/>
        <end position="447"/>
    </location>
</feature>
<reference key="1">
    <citation type="journal article" date="2001" name="Proc. Natl. Acad. Sci. U.S.A.">
        <title>Pattern of mutation in the genome of influenza A virus on adaptation to increased virulence in the mouse lung: identification of functional themes.</title>
        <authorList>
            <person name="Brown E.G."/>
            <person name="Liu H."/>
            <person name="Kit L.C."/>
            <person name="Baird S."/>
            <person name="Nesrallah M."/>
        </authorList>
    </citation>
    <scope>NUCLEOTIDE SEQUENCE [GENOMIC RNA]</scope>
</reference>
<reference key="2">
    <citation type="journal article" date="2003" name="FEBS Lett.">
        <title>A molecular mechanism for the low-pH stability of sialidase activity of influenza A virus N2 neuraminidases.</title>
        <authorList>
            <person name="Takahashi T."/>
            <person name="Suzuki T."/>
            <person name="Hidari K.I.-P.J."/>
            <person name="Miyamoto D."/>
            <person name="Suzuki Y."/>
        </authorList>
    </citation>
    <scope>NUCLEOTIDE SEQUENCE [GENOMIC RNA]</scope>
</reference>
<reference key="3">
    <citation type="journal article" date="2004" name="Virus Res.">
        <title>Assembly and budding of influenza virus.</title>
        <authorList>
            <person name="Nayak D.P."/>
            <person name="Hui E.K."/>
            <person name="Barman S."/>
        </authorList>
    </citation>
    <scope>REVIEW</scope>
</reference>
<reference key="4">
    <citation type="journal article" date="2005" name="N. Engl. J. Med.">
        <title>Neuraminidase inhibitors for influenza.</title>
        <authorList>
            <person name="Moscona A."/>
        </authorList>
    </citation>
    <scope>REVIEW</scope>
</reference>
<reference key="5">
    <citation type="journal article" date="2005" name="Biol. Pharm. Bull.">
        <title>Sialobiology of influenza: molecular mechanism of host range variation of influenza viruses.</title>
        <authorList>
            <person name="Suzuki Y."/>
        </authorList>
    </citation>
    <scope>REVIEW</scope>
</reference>
<organismHost>
    <name type="scientific">Aves</name>
    <dbReference type="NCBI Taxonomy" id="8782"/>
</organismHost>
<organismHost>
    <name type="scientific">Cetacea</name>
    <name type="common">whales</name>
    <dbReference type="NCBI Taxonomy" id="9721"/>
</organismHost>
<organismHost>
    <name type="scientific">Homo sapiens</name>
    <name type="common">Human</name>
    <dbReference type="NCBI Taxonomy" id="9606"/>
</organismHost>
<organismHost>
    <name type="scientific">Phocidae</name>
    <name type="common">true seals</name>
    <dbReference type="NCBI Taxonomy" id="9709"/>
</organismHost>
<organismHost>
    <name type="scientific">Sus scrofa</name>
    <name type="common">Pig</name>
    <dbReference type="NCBI Taxonomy" id="9823"/>
</organismHost>
<accession>Q91MA2</accession>
<dbReference type="EC" id="3.2.1.18" evidence="1"/>
<dbReference type="EMBL" id="AF348184">
    <property type="protein sequence ID" value="AAK51726.1"/>
    <property type="molecule type" value="Genomic_RNA"/>
</dbReference>
<dbReference type="EMBL" id="AB101674">
    <property type="protein sequence ID" value="BAC77663.1"/>
    <property type="molecule type" value="Genomic_RNA"/>
</dbReference>
<dbReference type="SMR" id="Q91MA2"/>
<dbReference type="GlyCosmos" id="Q91MA2">
    <property type="glycosylation" value="8 sites, No reported glycans"/>
</dbReference>
<dbReference type="PRO" id="PR:Q91MA2"/>
<dbReference type="Proteomes" id="UP000142359">
    <property type="component" value="Genome"/>
</dbReference>
<dbReference type="GO" id="GO:0020002">
    <property type="term" value="C:host cell plasma membrane"/>
    <property type="evidence" value="ECO:0007669"/>
    <property type="project" value="UniProtKB-SubCell"/>
</dbReference>
<dbReference type="GO" id="GO:0016020">
    <property type="term" value="C:membrane"/>
    <property type="evidence" value="ECO:0007669"/>
    <property type="project" value="UniProtKB-UniRule"/>
</dbReference>
<dbReference type="GO" id="GO:0055036">
    <property type="term" value="C:virion membrane"/>
    <property type="evidence" value="ECO:0007669"/>
    <property type="project" value="UniProtKB-SubCell"/>
</dbReference>
<dbReference type="GO" id="GO:0004308">
    <property type="term" value="F:exo-alpha-sialidase activity"/>
    <property type="evidence" value="ECO:0007669"/>
    <property type="project" value="UniProtKB-UniRule"/>
</dbReference>
<dbReference type="GO" id="GO:0046872">
    <property type="term" value="F:metal ion binding"/>
    <property type="evidence" value="ECO:0007669"/>
    <property type="project" value="UniProtKB-UniRule"/>
</dbReference>
<dbReference type="GO" id="GO:0005975">
    <property type="term" value="P:carbohydrate metabolic process"/>
    <property type="evidence" value="ECO:0007669"/>
    <property type="project" value="InterPro"/>
</dbReference>
<dbReference type="GO" id="GO:0046761">
    <property type="term" value="P:viral budding from plasma membrane"/>
    <property type="evidence" value="ECO:0007669"/>
    <property type="project" value="UniProtKB-UniRule"/>
</dbReference>
<dbReference type="CDD" id="cd15483">
    <property type="entry name" value="Influenza_NA"/>
    <property type="match status" value="1"/>
</dbReference>
<dbReference type="Gene3D" id="2.120.10.10">
    <property type="match status" value="1"/>
</dbReference>
<dbReference type="HAMAP" id="MF_04071">
    <property type="entry name" value="INFV_NRAM"/>
    <property type="match status" value="1"/>
</dbReference>
<dbReference type="InterPro" id="IPR001860">
    <property type="entry name" value="Glyco_hydro_34"/>
</dbReference>
<dbReference type="InterPro" id="IPR033654">
    <property type="entry name" value="Sialidase_Influenza_A/B"/>
</dbReference>
<dbReference type="InterPro" id="IPR036278">
    <property type="entry name" value="Sialidase_sf"/>
</dbReference>
<dbReference type="Pfam" id="PF00064">
    <property type="entry name" value="Neur"/>
    <property type="match status" value="1"/>
</dbReference>
<dbReference type="SUPFAM" id="SSF50939">
    <property type="entry name" value="Sialidases"/>
    <property type="match status" value="1"/>
</dbReference>
<name>NRAM_I68A4</name>
<gene>
    <name evidence="1" type="primary">NA</name>
</gene>
<keyword id="KW-0106">Calcium</keyword>
<keyword id="KW-1015">Disulfide bond</keyword>
<keyword id="KW-0325">Glycoprotein</keyword>
<keyword id="KW-0326">Glycosidase</keyword>
<keyword id="KW-1032">Host cell membrane</keyword>
<keyword id="KW-1043">Host membrane</keyword>
<keyword id="KW-0378">Hydrolase</keyword>
<keyword id="KW-0472">Membrane</keyword>
<keyword id="KW-0479">Metal-binding</keyword>
<keyword id="KW-0735">Signal-anchor</keyword>
<keyword id="KW-0812">Transmembrane</keyword>
<keyword id="KW-1133">Transmembrane helix</keyword>
<keyword id="KW-0946">Virion</keyword>
<organism>
    <name type="scientific">Influenza A virus (strain A/Hong Kong/1/1968 H3N2)</name>
    <dbReference type="NCBI Taxonomy" id="506350"/>
    <lineage>
        <taxon>Viruses</taxon>
        <taxon>Riboviria</taxon>
        <taxon>Orthornavirae</taxon>
        <taxon>Negarnaviricota</taxon>
        <taxon>Polyploviricotina</taxon>
        <taxon>Insthoviricetes</taxon>
        <taxon>Articulavirales</taxon>
        <taxon>Orthomyxoviridae</taxon>
        <taxon>Alphainfluenzavirus</taxon>
        <taxon>Alphainfluenzavirus influenzae</taxon>
        <taxon>Influenza A virus</taxon>
    </lineage>
</organism>
<sequence>MNPNQKIITIGSVSLTIATVCFLMQIAILVTTVTLHFKQYECDSPASNQVMPCEPIIIERNITEIVYLNNTTIEKEICPKVVEYRNWSKPQCQITGFAPFSKDNSIRLSAGGDIWVTREPYVSCDHGKCYQFALGQGTTLDNKHSNDTIHDRIPHRTLLMNELGVPFHLGTRQVCIAWSSSSCHDGKAWLHVCITGDDKNATASFIYDGRLVDSIGSWSQNILRTQESECVCINGTCTVVMTDGSASGRADTRILFIEEGKIVHISPLSGSAQHVEECSCYPRYPGVRCICRDNWKGSNRPVVDINMEDYSIDSSYVCSGLVGDTPRNDDRSSNSNCRNPNNERGNQGVKGWAFDNGDDVWMGRTISKDLRSGYETFKVIGGWSTPNSKSQINRQVIVDSDNRSGYSGIFSVEGKSCINRCFYVELIRGRKQETRVWWTSNSIVVFCGTSGTYGTGSWPDGANINFMPI</sequence>
<evidence type="ECO:0000255" key="1">
    <source>
        <dbReference type="HAMAP-Rule" id="MF_04071"/>
    </source>
</evidence>
<evidence type="ECO:0000256" key="2">
    <source>
        <dbReference type="SAM" id="MobiDB-lite"/>
    </source>
</evidence>
<comment type="function">
    <text evidence="1">Catalyzes the removal of terminal sialic acid residues from viral and cellular glycoconjugates. Cleaves off the terminal sialic acids on the glycosylated HA during virus budding to facilitate virus release. Additionally helps virus spread through the circulation by further removing sialic acids from the cell surface. These cleavages prevent self-aggregation and ensure the efficient spread of the progeny virus from cell to cell. Otherwise, infection would be limited to one round of replication. Described as a receptor-destroying enzyme because it cleaves a terminal sialic acid from the cellular receptors. May facilitate viral invasion of the upper airways by cleaving the sialic acid moieties on the mucin of the airway epithelial cells. Likely to plays a role in the budding process through its association with lipid rafts during intracellular transport. May additionally display a raft-association independent effect on budding. Plays a role in the determination of host range restriction on replication and virulence. Sialidase activity in late endosome/lysosome traffic seems to enhance virus replication.</text>
</comment>
<comment type="catalytic activity">
    <reaction evidence="1">
        <text>Hydrolysis of alpha-(2-&gt;3)-, alpha-(2-&gt;6)-, alpha-(2-&gt;8)- glycosidic linkages of terminal sialic acid residues in oligosaccharides, glycoproteins, glycolipids, colominic acid and synthetic substrates.</text>
        <dbReference type="EC" id="3.2.1.18"/>
    </reaction>
</comment>
<comment type="cofactor">
    <cofactor evidence="1">
        <name>Ca(2+)</name>
        <dbReference type="ChEBI" id="CHEBI:29108"/>
    </cofactor>
</comment>
<comment type="activity regulation">
    <text evidence="1">Inhibited by the neuraminidase inhibitors zanamivir (Relenza) and oseltamivir (Tamiflu). These drugs interfere with the release of progeny virus from infected cells and are effective against all influenza strains. Resistance to neuraminidase inhibitors is quite rare.</text>
</comment>
<comment type="subunit">
    <text evidence="1">Homotetramer.</text>
</comment>
<comment type="subcellular location">
    <subcellularLocation>
        <location evidence="1">Virion membrane</location>
    </subcellularLocation>
    <subcellularLocation>
        <location evidence="1">Host apical cell membrane</location>
        <topology evidence="1">Single-pass type II membrane protein</topology>
    </subcellularLocation>
    <text evidence="1">Preferentially accumulates at the apical plasma membrane in infected polarized epithelial cells, which is the virus assembly site. Uses lipid rafts for cell surface transport and apical sorting. In the virion, forms a mushroom-shaped spike on the surface of the membrane.</text>
</comment>
<comment type="domain">
    <text evidence="1">Intact N-terminus is essential for virion morphogenesis. Possesses two apical sorting signals, one in the ectodomain, which is likely to be a glycan, and the other in the transmembrane domain. The transmembrane domain also plays a role in lipid raft association.</text>
</comment>
<comment type="PTM">
    <text evidence="1">N-glycosylated.</text>
</comment>
<comment type="miscellaneous">
    <text>The influenza A genome consist of 8 RNA segments. Genetic variation of hemagglutinin and/or neuraminidase genes results in the emergence of new influenza strains. The mechanism of variation can be the result of point mutations or the result of genetic reassortment between segments of two different strains.</text>
</comment>
<comment type="similarity">
    <text evidence="1">Belongs to the glycosyl hydrolase 34 family.</text>
</comment>
<proteinExistence type="inferred from homology"/>
<protein>
    <recommendedName>
        <fullName evidence="1">Neuraminidase</fullName>
        <ecNumber evidence="1">3.2.1.18</ecNumber>
    </recommendedName>
</protein>